<comment type="function">
    <text evidence="5 6 7 8 9">Has transcriptional repression activity, partially through the recruitment of the corepressor TRIM28 but also has repression activity independently of this interaction (PubMed:22110054, PubMed:27658112). Essential during embryonic development, where it acts as direct repressor of IGF2-P0, placental-specific transcript of IGF2, in early development and regulates convergent extension movements required for axis elongation and tissue morphogenesis in all germ layers (PubMed:18701545, PubMed:22110054, PubMed:28522536). Also important for normal morphogenesis of extraembryonic tissues including the yolk sac, extraembryonic mesoderm and placenta (PubMed:18701545, PubMed:21094155). May enhance proliferation or maintenance of neural stem cells (PubMed:23071813).</text>
</comment>
<comment type="subunit">
    <text evidence="7 9 10">Interacts with TRIM28.</text>
</comment>
<comment type="subcellular location">
    <subcellularLocation>
        <location evidence="7 8">Nucleus</location>
    </subcellularLocation>
</comment>
<comment type="alternative products">
    <event type="alternative splicing"/>
    <isoform>
        <id>E9PYI1-1</id>
        <name>1</name>
        <sequence type="displayed"/>
    </isoform>
    <isoform>
        <id>E9PYI1-2</id>
        <name>2</name>
        <sequence type="described" ref="VSP_058610"/>
    </isoform>
</comment>
<comment type="tissue specificity">
    <text evidence="8">Little or no expression detected in most adult tissues (brain, liver, kidney, spleen, testis, ovary). In the hippocampus, detected in neural stem cells within the subventricular zone and subgranular zone.</text>
</comment>
<comment type="developmental stage">
    <text evidence="5 8">Expressed ubiquitously at 7.5 dpc and 8.5 dpc, with especially high levels in the extraembryonic ectoderm (PubMed:18701545). Expressed strongly in head from stages 10.5 dpc to 12.5 dpc (PubMed:23071813). In fetal brain, shows highest expression levels at stage 13.5 dpc with low levels thereafter (PubMed:23071813). Detected in neural stem cells of the neocortex at stage 12.5 dpc (PubMed:23071813).</text>
</comment>
<comment type="domain">
    <text evidence="9">KRAB domain 1, but not KRAB domain 2, is required for transcriptional repression. Both contribute to interaction with TRIM28. Differences in repressive activity between KRAB domain 1 and 2 are likely due to amino acid differences at multiple residues.</text>
</comment>
<comment type="disruption phenotype">
    <text evidence="8 10">Mutant embryos arrest at 9 dpc, they fail to complete gastrulation, have convergent-extension failure and a yolk sac membrane-ruffling phenotype (PubMed:28522536). Conditional knockdown in neural stem cells results in reduced brain weight at birth, however adult brain weights are normal and no other defects in brain development or morphology are apparent (PubMed:23071813). Double knockout for ZNF568 and IGF2 embryos and fetuses are found at near Mendelian ratios and indistiguishable of wild type littermates at 12.5 dpc to 18.5 dpc. However, after birth few dead pups are recovered (PubMed:28522536).</text>
</comment>
<comment type="miscellaneous">
    <molecule>Isoform 2</molecule>
    <text evidence="12">May be due to competing acceptor splice site.</text>
</comment>
<comment type="similarity">
    <text evidence="12">Belongs to the krueppel C2H2-type zinc-finger protein family.</text>
</comment>
<sequence>MERLSQMAGRRAWCAEDSVPRQEEEDRTRPSKTVTFKDVAVDLTQEEWQQMKPAQRALYRDVMLETYSNLVTVGCQVTKPDVIFKLEQAEEPWVLEEEMFWRRSPEAARGRMKSFAFKDMAKDLRFEDVVIYFSLEEWECLRHSHRNLYRAVMLDNYSNLLSLSLADTKPRVVSLLEQGKEPWMVMRNETKIWHPDWVSRTEAKDSSKIKTLQEKMAKKHTCPTLEDSKTRGDREVTRELEGQQVHQEGHLRQAAVTSVERPDSVQCTAHREAHPGGKPCSSEKSQKTSLCQPPPIEREQLHSKAKASEHAQHGKVFNSCTSDTAVHPRPQESRKDSERKKSALAGGPDTSKPQSAQGSERPHKCKECGKAFHTPSQLSHHQKLHVGEKPYKCQECGKAFPSNAQLSLHHRVHTDEKCFECKECGKAFMRPSHLLRHQRIHTGEKPHKCKECGKAFRYDTQLSLHLLTHAGARRFECKDCDKVYSCASQLALHQMSHTGEKPHKCKECGKGFISDSHLLRHQSVHTGETPYKCKECGKGFRRGSELARHQRAHSGDKPYKCKECGKSFTCTTELFRHQKVHTGDRPHKCKECGKAFIRRSELTHHERSHSGEKPYECKECGKTFGRGSELSRHQKIHTGEKPYKCQQCGKAFIRGSHLTQHQRIHTGRRSE</sequence>
<keyword id="KW-0002">3D-structure</keyword>
<keyword id="KW-0025">Alternative splicing</keyword>
<keyword id="KW-0217">Developmental protein</keyword>
<keyword id="KW-0238">DNA-binding</keyword>
<keyword id="KW-0479">Metal-binding</keyword>
<keyword id="KW-0539">Nucleus</keyword>
<keyword id="KW-1185">Reference proteome</keyword>
<keyword id="KW-0677">Repeat</keyword>
<keyword id="KW-0804">Transcription</keyword>
<keyword id="KW-0805">Transcription regulation</keyword>
<keyword id="KW-0862">Zinc</keyword>
<keyword id="KW-0863">Zinc-finger</keyword>
<protein>
    <recommendedName>
        <fullName evidence="15">Zinc finger protein 568</fullName>
    </recommendedName>
</protein>
<evidence type="ECO:0000250" key="1">
    <source>
        <dbReference type="UniProtKB" id="Q3ZCX4"/>
    </source>
</evidence>
<evidence type="ECO:0000255" key="2">
    <source>
        <dbReference type="PROSITE-ProRule" id="PRU00042"/>
    </source>
</evidence>
<evidence type="ECO:0000255" key="3">
    <source>
        <dbReference type="PROSITE-ProRule" id="PRU00119"/>
    </source>
</evidence>
<evidence type="ECO:0000256" key="4">
    <source>
        <dbReference type="SAM" id="MobiDB-lite"/>
    </source>
</evidence>
<evidence type="ECO:0000269" key="5">
    <source>
    </source>
</evidence>
<evidence type="ECO:0000269" key="6">
    <source>
    </source>
</evidence>
<evidence type="ECO:0000269" key="7">
    <source>
    </source>
</evidence>
<evidence type="ECO:0000269" key="8">
    <source>
    </source>
</evidence>
<evidence type="ECO:0000269" key="9">
    <source>
    </source>
</evidence>
<evidence type="ECO:0000269" key="10">
    <source>
    </source>
</evidence>
<evidence type="ECO:0000303" key="11">
    <source>
    </source>
</evidence>
<evidence type="ECO:0000305" key="12"/>
<evidence type="ECO:0000312" key="13">
    <source>
        <dbReference type="EMBL" id="AAH82606.1"/>
    </source>
</evidence>
<evidence type="ECO:0000312" key="14">
    <source>
        <dbReference type="EMBL" id="BAE25391.1"/>
    </source>
</evidence>
<evidence type="ECO:0000312" key="15">
    <source>
        <dbReference type="MGI" id="MGI:2142347"/>
    </source>
</evidence>
<evidence type="ECO:0000312" key="16">
    <source>
        <dbReference type="Proteomes" id="UP000000589"/>
    </source>
</evidence>
<evidence type="ECO:0007829" key="17">
    <source>
        <dbReference type="PDB" id="5V3J"/>
    </source>
</evidence>
<evidence type="ECO:0007829" key="18">
    <source>
        <dbReference type="PDB" id="5WJQ"/>
    </source>
</evidence>
<proteinExistence type="evidence at protein level"/>
<reference evidence="14" key="1">
    <citation type="journal article" date="2005" name="Science">
        <title>The transcriptional landscape of the mammalian genome.</title>
        <authorList>
            <person name="Carninci P."/>
            <person name="Kasukawa T."/>
            <person name="Katayama S."/>
            <person name="Gough J."/>
            <person name="Frith M.C."/>
            <person name="Maeda N."/>
            <person name="Oyama R."/>
            <person name="Ravasi T."/>
            <person name="Lenhard B."/>
            <person name="Wells C."/>
            <person name="Kodzius R."/>
            <person name="Shimokawa K."/>
            <person name="Bajic V.B."/>
            <person name="Brenner S.E."/>
            <person name="Batalov S."/>
            <person name="Forrest A.R."/>
            <person name="Zavolan M."/>
            <person name="Davis M.J."/>
            <person name="Wilming L.G."/>
            <person name="Aidinis V."/>
            <person name="Allen J.E."/>
            <person name="Ambesi-Impiombato A."/>
            <person name="Apweiler R."/>
            <person name="Aturaliya R.N."/>
            <person name="Bailey T.L."/>
            <person name="Bansal M."/>
            <person name="Baxter L."/>
            <person name="Beisel K.W."/>
            <person name="Bersano T."/>
            <person name="Bono H."/>
            <person name="Chalk A.M."/>
            <person name="Chiu K.P."/>
            <person name="Choudhary V."/>
            <person name="Christoffels A."/>
            <person name="Clutterbuck D.R."/>
            <person name="Crowe M.L."/>
            <person name="Dalla E."/>
            <person name="Dalrymple B.P."/>
            <person name="de Bono B."/>
            <person name="Della Gatta G."/>
            <person name="di Bernardo D."/>
            <person name="Down T."/>
            <person name="Engstrom P."/>
            <person name="Fagiolini M."/>
            <person name="Faulkner G."/>
            <person name="Fletcher C.F."/>
            <person name="Fukushima T."/>
            <person name="Furuno M."/>
            <person name="Futaki S."/>
            <person name="Gariboldi M."/>
            <person name="Georgii-Hemming P."/>
            <person name="Gingeras T.R."/>
            <person name="Gojobori T."/>
            <person name="Green R.E."/>
            <person name="Gustincich S."/>
            <person name="Harbers M."/>
            <person name="Hayashi Y."/>
            <person name="Hensch T.K."/>
            <person name="Hirokawa N."/>
            <person name="Hill D."/>
            <person name="Huminiecki L."/>
            <person name="Iacono M."/>
            <person name="Ikeo K."/>
            <person name="Iwama A."/>
            <person name="Ishikawa T."/>
            <person name="Jakt M."/>
            <person name="Kanapin A."/>
            <person name="Katoh M."/>
            <person name="Kawasawa Y."/>
            <person name="Kelso J."/>
            <person name="Kitamura H."/>
            <person name="Kitano H."/>
            <person name="Kollias G."/>
            <person name="Krishnan S.P."/>
            <person name="Kruger A."/>
            <person name="Kummerfeld S.K."/>
            <person name="Kurochkin I.V."/>
            <person name="Lareau L.F."/>
            <person name="Lazarevic D."/>
            <person name="Lipovich L."/>
            <person name="Liu J."/>
            <person name="Liuni S."/>
            <person name="McWilliam S."/>
            <person name="Madan Babu M."/>
            <person name="Madera M."/>
            <person name="Marchionni L."/>
            <person name="Matsuda H."/>
            <person name="Matsuzawa S."/>
            <person name="Miki H."/>
            <person name="Mignone F."/>
            <person name="Miyake S."/>
            <person name="Morris K."/>
            <person name="Mottagui-Tabar S."/>
            <person name="Mulder N."/>
            <person name="Nakano N."/>
            <person name="Nakauchi H."/>
            <person name="Ng P."/>
            <person name="Nilsson R."/>
            <person name="Nishiguchi S."/>
            <person name="Nishikawa S."/>
            <person name="Nori F."/>
            <person name="Ohara O."/>
            <person name="Okazaki Y."/>
            <person name="Orlando V."/>
            <person name="Pang K.C."/>
            <person name="Pavan W.J."/>
            <person name="Pavesi G."/>
            <person name="Pesole G."/>
            <person name="Petrovsky N."/>
            <person name="Piazza S."/>
            <person name="Reed J."/>
            <person name="Reid J.F."/>
            <person name="Ring B.Z."/>
            <person name="Ringwald M."/>
            <person name="Rost B."/>
            <person name="Ruan Y."/>
            <person name="Salzberg S.L."/>
            <person name="Sandelin A."/>
            <person name="Schneider C."/>
            <person name="Schoenbach C."/>
            <person name="Sekiguchi K."/>
            <person name="Semple C.A."/>
            <person name="Seno S."/>
            <person name="Sessa L."/>
            <person name="Sheng Y."/>
            <person name="Shibata Y."/>
            <person name="Shimada H."/>
            <person name="Shimada K."/>
            <person name="Silva D."/>
            <person name="Sinclair B."/>
            <person name="Sperling S."/>
            <person name="Stupka E."/>
            <person name="Sugiura K."/>
            <person name="Sultana R."/>
            <person name="Takenaka Y."/>
            <person name="Taki K."/>
            <person name="Tammoja K."/>
            <person name="Tan S.L."/>
            <person name="Tang S."/>
            <person name="Taylor M.S."/>
            <person name="Tegner J."/>
            <person name="Teichmann S.A."/>
            <person name="Ueda H.R."/>
            <person name="van Nimwegen E."/>
            <person name="Verardo R."/>
            <person name="Wei C.L."/>
            <person name="Yagi K."/>
            <person name="Yamanishi H."/>
            <person name="Zabarovsky E."/>
            <person name="Zhu S."/>
            <person name="Zimmer A."/>
            <person name="Hide W."/>
            <person name="Bult C."/>
            <person name="Grimmond S.M."/>
            <person name="Teasdale R.D."/>
            <person name="Liu E.T."/>
            <person name="Brusic V."/>
            <person name="Quackenbush J."/>
            <person name="Wahlestedt C."/>
            <person name="Mattick J.S."/>
            <person name="Hume D.A."/>
            <person name="Kai C."/>
            <person name="Sasaki D."/>
            <person name="Tomaru Y."/>
            <person name="Fukuda S."/>
            <person name="Kanamori-Katayama M."/>
            <person name="Suzuki M."/>
            <person name="Aoki J."/>
            <person name="Arakawa T."/>
            <person name="Iida J."/>
            <person name="Imamura K."/>
            <person name="Itoh M."/>
            <person name="Kato T."/>
            <person name="Kawaji H."/>
            <person name="Kawagashira N."/>
            <person name="Kawashima T."/>
            <person name="Kojima M."/>
            <person name="Kondo S."/>
            <person name="Konno H."/>
            <person name="Nakano K."/>
            <person name="Ninomiya N."/>
            <person name="Nishio T."/>
            <person name="Okada M."/>
            <person name="Plessy C."/>
            <person name="Shibata K."/>
            <person name="Shiraki T."/>
            <person name="Suzuki S."/>
            <person name="Tagami M."/>
            <person name="Waki K."/>
            <person name="Watahiki A."/>
            <person name="Okamura-Oho Y."/>
            <person name="Suzuki H."/>
            <person name="Kawai J."/>
            <person name="Hayashizaki Y."/>
        </authorList>
    </citation>
    <scope>NUCLEOTIDE SEQUENCE [LARGE SCALE MRNA]</scope>
    <source>
        <strain evidence="14">C57BL/6J</strain>
        <tissue evidence="14">Embryo</tissue>
    </source>
</reference>
<reference evidence="16" key="2">
    <citation type="journal article" date="2009" name="PLoS Biol.">
        <title>Lineage-specific biology revealed by a finished genome assembly of the mouse.</title>
        <authorList>
            <person name="Church D.M."/>
            <person name="Goodstadt L."/>
            <person name="Hillier L.W."/>
            <person name="Zody M.C."/>
            <person name="Goldstein S."/>
            <person name="She X."/>
            <person name="Bult C.J."/>
            <person name="Agarwala R."/>
            <person name="Cherry J.L."/>
            <person name="DiCuccio M."/>
            <person name="Hlavina W."/>
            <person name="Kapustin Y."/>
            <person name="Meric P."/>
            <person name="Maglott D."/>
            <person name="Birtle Z."/>
            <person name="Marques A.C."/>
            <person name="Graves T."/>
            <person name="Zhou S."/>
            <person name="Teague B."/>
            <person name="Potamousis K."/>
            <person name="Churas C."/>
            <person name="Place M."/>
            <person name="Herschleb J."/>
            <person name="Runnheim R."/>
            <person name="Forrest D."/>
            <person name="Amos-Landgraf J."/>
            <person name="Schwartz D.C."/>
            <person name="Cheng Z."/>
            <person name="Lindblad-Toh K."/>
            <person name="Eichler E.E."/>
            <person name="Ponting C.P."/>
        </authorList>
    </citation>
    <scope>NUCLEOTIDE SEQUENCE [LARGE SCALE GENOMIC DNA]</scope>
    <source>
        <strain evidence="16">C57BL/6J</strain>
    </source>
</reference>
<reference evidence="13" key="3">
    <citation type="journal article" date="2004" name="Genome Res.">
        <title>The status, quality, and expansion of the NIH full-length cDNA project: the Mammalian Gene Collection (MGC).</title>
        <authorList>
            <consortium name="The MGC Project Team"/>
        </authorList>
    </citation>
    <scope>NUCLEOTIDE SEQUENCE [LARGE SCALE MRNA] (ISOFORM 2)</scope>
    <source>
        <strain evidence="13">C57BL/6J</strain>
        <tissue evidence="13">Head</tissue>
    </source>
</reference>
<reference evidence="12" key="4">
    <citation type="journal article" date="2008" name="Development">
        <title>Chato, a KRAB zinc-finger protein, regulates convergent extension in the mouse embryo.</title>
        <authorList>
            <person name="Garcia-Garcia M.J."/>
            <person name="Shibata M."/>
            <person name="Anderson K.V."/>
        </authorList>
    </citation>
    <scope>FUNCTION</scope>
    <scope>DEVELOPMENTAL STAGE</scope>
    <scope>MUTAGENESIS OF LEU-64</scope>
</reference>
<reference evidence="12" key="5">
    <citation type="journal article" date="2011" name="Development">
        <title>TRIM28 is required by the mouse KRAB domain protein ZFP568 to control convergent extension and morphogenesis of extra-embryonic tissues.</title>
        <authorList>
            <person name="Shibata M."/>
            <person name="Blauvelt K.E."/>
            <person name="Liem K.F. Jr."/>
            <person name="Garcia-Garcia M.J."/>
        </authorList>
    </citation>
    <scope>FUNCTION</scope>
    <scope>INTERACTION WITH TRIM28</scope>
    <scope>SUBCELLULAR LOCATION</scope>
    <scope>MUTAGENESIS OF LEU-64</scope>
</reference>
<reference evidence="12" key="6">
    <citation type="journal article" date="2011" name="Dev. Biol.">
        <title>The mouse KRAB zinc-finger protein CHATO is required in embryonic-derived tissues to control yolk sac and placenta morphogenesis.</title>
        <authorList>
            <person name="Shibata M."/>
            <person name="Garcia-Garcia M.J."/>
        </authorList>
    </citation>
    <scope>FUNCTION</scope>
    <scope>MUTAGENESIS OF LEU-64</scope>
</reference>
<reference evidence="12" key="7">
    <citation type="journal article" date="2012" name="PLoS ONE">
        <title>Targeted disruption in mice of a neural stem cell-maintaining, KRAB-Zn finger-encoding gene that has rapidly evolved in the human lineage.</title>
        <authorList>
            <person name="Chien H.C."/>
            <person name="Wang H.Y."/>
            <person name="Su Y.N."/>
            <person name="Lai K.Y."/>
            <person name="Lu L.C."/>
            <person name="Chen P.C."/>
            <person name="Tsai S.F."/>
            <person name="Wu C.I."/>
            <person name="Hsieh W.S."/>
            <person name="Shen C.K."/>
        </authorList>
    </citation>
    <scope>FUNCTION</scope>
    <scope>SUBCELLULAR LOCATION</scope>
    <scope>TISSUE SPECIFICITY</scope>
    <scope>DEVELOPMENTAL STAGE</scope>
    <scope>DISRUPTION PHENOTYPE</scope>
</reference>
<reference key="8">
    <citation type="journal article" date="2016" name="PLoS ONE">
        <title>The Transcriptional Repressive Activity of KRAB Zinc Finger Proteins Does Not Correlate with Their Ability to Recruit TRIM28.</title>
        <authorList>
            <person name="Murphy K.E."/>
            <person name="Shylo N.A."/>
            <person name="Alexander K.A."/>
            <person name="Churchill A.J."/>
            <person name="Copperman C."/>
            <person name="Garcia-Garcia M.J."/>
        </authorList>
    </citation>
    <scope>FUNCTION</scope>
    <scope>INTERACTION WITH TRIM28</scope>
    <scope>MUTAGENESIS OF LYS-37; GLN-45; GLN-55; ASP-61; LEU-64; GLU-65; LEU-154 AND ASP-155</scope>
    <scope>DOMAIN</scope>
</reference>
<reference key="9">
    <citation type="journal article" date="2017" name="Science">
        <title>A placental growth factor is silenced in mouse embryos by the zinc finger protein ZFP568.</title>
        <authorList>
            <person name="Yang P."/>
            <person name="Wang Y."/>
            <person name="Hoang D."/>
            <person name="Tinkham M."/>
            <person name="Patel A."/>
            <person name="Sun M.A."/>
            <person name="Wolf G."/>
            <person name="Baker M."/>
            <person name="Chien H.C."/>
            <person name="Lai K.N."/>
            <person name="Cheng X."/>
            <person name="Shen C.J."/>
            <person name="Macfarlan T.S."/>
        </authorList>
    </citation>
    <scope>FUNCTION</scope>
    <scope>DISRUPTION PHENOTYPE</scope>
    <scope>DNA-BINDING</scope>
</reference>
<accession>E9PYI1</accession>
<accession>Q0VGV0</accession>
<accession>Q3UPK4</accession>
<organism evidence="16">
    <name type="scientific">Mus musculus</name>
    <name type="common">Mouse</name>
    <dbReference type="NCBI Taxonomy" id="10090"/>
    <lineage>
        <taxon>Eukaryota</taxon>
        <taxon>Metazoa</taxon>
        <taxon>Chordata</taxon>
        <taxon>Craniata</taxon>
        <taxon>Vertebrata</taxon>
        <taxon>Euteleostomi</taxon>
        <taxon>Mammalia</taxon>
        <taxon>Eutheria</taxon>
        <taxon>Euarchontoglires</taxon>
        <taxon>Glires</taxon>
        <taxon>Rodentia</taxon>
        <taxon>Myomorpha</taxon>
        <taxon>Muroidea</taxon>
        <taxon>Muridae</taxon>
        <taxon>Murinae</taxon>
        <taxon>Mus</taxon>
        <taxon>Mus</taxon>
    </lineage>
</organism>
<gene>
    <name evidence="1" type="primary">Znf568</name>
    <name evidence="11 15" type="synonym">chato</name>
    <name evidence="15" type="synonym">Zfp568</name>
</gene>
<name>ZN568_MOUSE</name>
<feature type="chain" id="PRO_0000438106" description="Zinc finger protein 568">
    <location>
        <begin position="1"/>
        <end position="671"/>
    </location>
</feature>
<feature type="domain" description="KRAB 1" evidence="3">
    <location>
        <begin position="34"/>
        <end position="105"/>
    </location>
</feature>
<feature type="domain" description="KRAB 2" evidence="3">
    <location>
        <begin position="124"/>
        <end position="195"/>
    </location>
</feature>
<feature type="zinc finger region" description="C2H2-type 1" evidence="2">
    <location>
        <begin position="363"/>
        <end position="385"/>
    </location>
</feature>
<feature type="zinc finger region" description="C2H2-type 2" evidence="2">
    <location>
        <begin position="391"/>
        <end position="413"/>
    </location>
</feature>
<feature type="zinc finger region" description="C2H2-type 3" evidence="2">
    <location>
        <begin position="419"/>
        <end position="441"/>
    </location>
</feature>
<feature type="zinc finger region" description="C2H2-type 4" evidence="2">
    <location>
        <begin position="447"/>
        <end position="469"/>
    </location>
</feature>
<feature type="zinc finger region" description="C2H2-type 5" evidence="2">
    <location>
        <begin position="475"/>
        <end position="497"/>
    </location>
</feature>
<feature type="zinc finger region" description="C2H2-type 6" evidence="2">
    <location>
        <begin position="503"/>
        <end position="525"/>
    </location>
</feature>
<feature type="zinc finger region" description="C2H2-type 7" evidence="2">
    <location>
        <begin position="531"/>
        <end position="553"/>
    </location>
</feature>
<feature type="zinc finger region" description="C2H2-type 8" evidence="2">
    <location>
        <begin position="559"/>
        <end position="581"/>
    </location>
</feature>
<feature type="zinc finger region" description="C2H2-type 9" evidence="2">
    <location>
        <begin position="587"/>
        <end position="609"/>
    </location>
</feature>
<feature type="zinc finger region" description="C2H2-type 10" evidence="2">
    <location>
        <begin position="615"/>
        <end position="637"/>
    </location>
</feature>
<feature type="zinc finger region" description="C2H2-type 11" evidence="2">
    <location>
        <begin position="643"/>
        <end position="665"/>
    </location>
</feature>
<feature type="region of interest" description="Disordered" evidence="4">
    <location>
        <begin position="1"/>
        <end position="31"/>
    </location>
</feature>
<feature type="region of interest" description="Disordered" evidence="4">
    <location>
        <begin position="214"/>
        <end position="366"/>
    </location>
</feature>
<feature type="compositionally biased region" description="Basic and acidic residues" evidence="4">
    <location>
        <begin position="18"/>
        <end position="29"/>
    </location>
</feature>
<feature type="compositionally biased region" description="Basic and acidic residues" evidence="4">
    <location>
        <begin position="226"/>
        <end position="251"/>
    </location>
</feature>
<feature type="compositionally biased region" description="Basic and acidic residues" evidence="4">
    <location>
        <begin position="296"/>
        <end position="312"/>
    </location>
</feature>
<feature type="compositionally biased region" description="Basic and acidic residues" evidence="4">
    <location>
        <begin position="329"/>
        <end position="341"/>
    </location>
</feature>
<feature type="splice variant" id="VSP_058610" description="In isoform 2." evidence="12">
    <location>
        <position position="106"/>
    </location>
</feature>
<feature type="mutagenesis site" description="No effect on transcriptional repression." evidence="9">
    <original>K</original>
    <variation>E</variation>
    <location>
        <position position="37"/>
    </location>
</feature>
<feature type="mutagenesis site" description="Strongly decreases transcriptional repression. No effect on interaction with THRIM28. No effect on interaction with THRIM28." evidence="9">
    <original>DV</original>
    <variation>AA</variation>
    <location>
        <begin position="38"/>
        <end position="39"/>
    </location>
</feature>
<feature type="mutagenesis site" description="No effect on transcriptional repression." evidence="9">
    <original>Q</original>
    <variation>L</variation>
    <location>
        <position position="45"/>
    </location>
</feature>
<feature type="mutagenesis site" description="Decreases transcriptional repression." evidence="9">
    <original>Q</original>
    <variation>H</variation>
    <location>
        <position position="55"/>
    </location>
</feature>
<feature type="mutagenesis site" description="Decreases transcriptional repression." evidence="9">
    <original>D</original>
    <variation>A</variation>
    <location>
        <position position="61"/>
    </location>
</feature>
<feature type="mutagenesis site" description="In chato; probable null mutation. Almost abolishes transcriptional repression. No effect on interaction with THRIM28. Embryonic development arrests at stage 9 dpc. Widespread morphogenetic defects are found in all germ layers, associated with defective convergent extension movements. The anterior-posterior axis is abnormally shortened, somites are mediolaterally expanded, and the neural tube fails to close normally. Morphogenesis of most mesodermal tissues is also defective. The definitive endoderm fails to narrow and elongate leading to an open gut tube. Extraembryonic tissues are also abnormal with bubble-like protrusions in the yolk sac, aberrant migration of extraembryonic mesoderm, and incomplete placental development. Abolishes interaction with TRIM28; when associated with P-154." evidence="5 6 7 9">
    <original>L</original>
    <variation>P</variation>
    <location>
        <position position="64"/>
    </location>
</feature>
<feature type="mutagenesis site" description="Decreases transcriptional repression." evidence="9">
    <original>E</original>
    <variation>D</variation>
    <location>
        <position position="65"/>
    </location>
</feature>
<feature type="mutagenesis site" description="No effect on transcriptional repression. No effect on interaction with THRIM28." evidence="9">
    <original>DV</original>
    <variation>AA</variation>
    <location>
        <begin position="128"/>
        <end position="129"/>
    </location>
</feature>
<feature type="mutagenesis site" description="No effect on transcriptional repression. Abolishes interaction with TRIM28; when associated with P-64." evidence="9">
    <original>L</original>
    <variation>P</variation>
    <location>
        <position position="154"/>
    </location>
</feature>
<feature type="mutagenesis site" description="Increases transcriptional repression. No effect on interaction with THRIM28." evidence="9">
    <original>D</original>
    <variation>E</variation>
    <location>
        <position position="155"/>
    </location>
</feature>
<feature type="sequence conflict" description="In Ref. 1; BAE25391." evidence="12" ref="1">
    <original>T</original>
    <variation>S</variation>
    <location>
        <position position="569"/>
    </location>
</feature>
<feature type="strand" evidence="17">
    <location>
        <begin position="366"/>
        <end position="368"/>
    </location>
</feature>
<feature type="helix" evidence="17">
    <location>
        <begin position="375"/>
        <end position="387"/>
    </location>
</feature>
<feature type="turn" evidence="17">
    <location>
        <begin position="394"/>
        <end position="396"/>
    </location>
</feature>
<feature type="strand" evidence="17">
    <location>
        <begin position="399"/>
        <end position="402"/>
    </location>
</feature>
<feature type="helix" evidence="17">
    <location>
        <begin position="403"/>
        <end position="410"/>
    </location>
</feature>
<feature type="helix" evidence="17">
    <location>
        <begin position="411"/>
        <end position="413"/>
    </location>
</feature>
<feature type="strand" evidence="17">
    <location>
        <begin position="414"/>
        <end position="416"/>
    </location>
</feature>
<feature type="turn" evidence="17">
    <location>
        <begin position="422"/>
        <end position="424"/>
    </location>
</feature>
<feature type="strand" evidence="17">
    <location>
        <begin position="427"/>
        <end position="430"/>
    </location>
</feature>
<feature type="helix" evidence="17">
    <location>
        <begin position="431"/>
        <end position="442"/>
    </location>
</feature>
<feature type="turn" evidence="17">
    <location>
        <begin position="450"/>
        <end position="452"/>
    </location>
</feature>
<feature type="strand" evidence="17">
    <location>
        <begin position="455"/>
        <end position="458"/>
    </location>
</feature>
<feature type="helix" evidence="17">
    <location>
        <begin position="459"/>
        <end position="466"/>
    </location>
</feature>
<feature type="strand" evidence="18">
    <location>
        <begin position="469"/>
        <end position="471"/>
    </location>
</feature>
<feature type="strand" evidence="17">
    <location>
        <begin position="478"/>
        <end position="481"/>
    </location>
</feature>
<feature type="strand" evidence="17">
    <location>
        <begin position="483"/>
        <end position="486"/>
    </location>
</feature>
<feature type="helix" evidence="17">
    <location>
        <begin position="487"/>
        <end position="498"/>
    </location>
</feature>
<feature type="turn" evidence="17">
    <location>
        <begin position="506"/>
        <end position="508"/>
    </location>
</feature>
<feature type="strand" evidence="17">
    <location>
        <begin position="511"/>
        <end position="514"/>
    </location>
</feature>
<feature type="helix" evidence="17">
    <location>
        <begin position="515"/>
        <end position="521"/>
    </location>
</feature>
<feature type="helix" evidence="17">
    <location>
        <begin position="523"/>
        <end position="526"/>
    </location>
</feature>
<feature type="turn" evidence="17">
    <location>
        <begin position="534"/>
        <end position="536"/>
    </location>
</feature>
<feature type="strand" evidence="17">
    <location>
        <begin position="539"/>
        <end position="542"/>
    </location>
</feature>
<feature type="helix" evidence="17">
    <location>
        <begin position="543"/>
        <end position="554"/>
    </location>
</feature>
<feature type="turn" evidence="17">
    <location>
        <begin position="562"/>
        <end position="564"/>
    </location>
</feature>
<feature type="strand" evidence="17">
    <location>
        <begin position="567"/>
        <end position="570"/>
    </location>
</feature>
<feature type="helix" evidence="17">
    <location>
        <begin position="571"/>
        <end position="582"/>
    </location>
</feature>
<feature type="turn" evidence="17">
    <location>
        <begin position="590"/>
        <end position="592"/>
    </location>
</feature>
<feature type="strand" evidence="17">
    <location>
        <begin position="595"/>
        <end position="598"/>
    </location>
</feature>
<feature type="helix" evidence="17">
    <location>
        <begin position="599"/>
        <end position="610"/>
    </location>
</feature>
<feature type="turn" evidence="17">
    <location>
        <begin position="618"/>
        <end position="620"/>
    </location>
</feature>
<feature type="strand" evidence="17">
    <location>
        <begin position="623"/>
        <end position="626"/>
    </location>
</feature>
<feature type="helix" evidence="17">
    <location>
        <begin position="627"/>
        <end position="637"/>
    </location>
</feature>
<feature type="turn" evidence="18">
    <location>
        <begin position="646"/>
        <end position="648"/>
    </location>
</feature>
<feature type="helix" evidence="18">
    <location>
        <begin position="655"/>
        <end position="662"/>
    </location>
</feature>
<feature type="turn" evidence="18">
    <location>
        <begin position="663"/>
        <end position="665"/>
    </location>
</feature>
<dbReference type="EMBL" id="AK143471">
    <property type="protein sequence ID" value="BAE25391.1"/>
    <property type="molecule type" value="mRNA"/>
</dbReference>
<dbReference type="EMBL" id="AC149283">
    <property type="status" value="NOT_ANNOTATED_CDS"/>
    <property type="molecule type" value="Genomic_DNA"/>
</dbReference>
<dbReference type="EMBL" id="BC082606">
    <property type="protein sequence ID" value="AAH82606.1"/>
    <property type="molecule type" value="mRNA"/>
</dbReference>
<dbReference type="CCDS" id="CCDS21077.1">
    <molecule id="E9PYI1-1"/>
</dbReference>
<dbReference type="CCDS" id="CCDS52176.1">
    <molecule id="E9PYI1-2"/>
</dbReference>
<dbReference type="RefSeq" id="NP_001028527.2">
    <molecule id="E9PYI1-1"/>
    <property type="nucleotide sequence ID" value="NM_001033355.3"/>
</dbReference>
<dbReference type="RefSeq" id="NP_001161344.1">
    <molecule id="E9PYI1-1"/>
    <property type="nucleotide sequence ID" value="NM_001167872.1"/>
</dbReference>
<dbReference type="RefSeq" id="NP_001161345.1">
    <molecule id="E9PYI1-2"/>
    <property type="nucleotide sequence ID" value="NM_001167873.1"/>
</dbReference>
<dbReference type="RefSeq" id="XP_011248871.1">
    <molecule id="E9PYI1-1"/>
    <property type="nucleotide sequence ID" value="XM_011250569.2"/>
</dbReference>
<dbReference type="PDB" id="5V3J">
    <property type="method" value="X-ray"/>
    <property type="resolution" value="2.06 A"/>
    <property type="chains" value="E/F=362-640"/>
</dbReference>
<dbReference type="PDB" id="5V3M">
    <property type="method" value="X-ray"/>
    <property type="resolution" value="2.09 A"/>
    <property type="chains" value="C=362-669"/>
</dbReference>
<dbReference type="PDB" id="5WJQ">
    <property type="method" value="X-ray"/>
    <property type="resolution" value="2.79 A"/>
    <property type="chains" value="D=388-668"/>
</dbReference>
<dbReference type="PDBsum" id="5V3J"/>
<dbReference type="PDBsum" id="5V3M"/>
<dbReference type="PDBsum" id="5WJQ"/>
<dbReference type="SMR" id="E9PYI1"/>
<dbReference type="FunCoup" id="E9PYI1">
    <property type="interactions" value="11"/>
</dbReference>
<dbReference type="STRING" id="10090.ENSMUSP00000118387"/>
<dbReference type="iPTMnet" id="E9PYI1"/>
<dbReference type="PhosphoSitePlus" id="E9PYI1"/>
<dbReference type="PaxDb" id="10090-ENSMUSP00000118387"/>
<dbReference type="PeptideAtlas" id="E9PYI1"/>
<dbReference type="ProteomicsDB" id="302088">
    <molecule id="E9PYI1-1"/>
</dbReference>
<dbReference type="ProteomicsDB" id="302089">
    <molecule id="E9PYI1-2"/>
</dbReference>
<dbReference type="Ensembl" id="ENSMUST00000074322.12">
    <molecule id="E9PYI1-1"/>
    <property type="protein sequence ID" value="ENSMUSP00000073930.6"/>
    <property type="gene ID" value="ENSMUSG00000074221.13"/>
</dbReference>
<dbReference type="Ensembl" id="ENSMUST00000146074.8">
    <molecule id="E9PYI1-2"/>
    <property type="protein sequence ID" value="ENSMUSP00000118823.2"/>
    <property type="gene ID" value="ENSMUSG00000074221.13"/>
</dbReference>
<dbReference type="Ensembl" id="ENSMUST00000148442.8">
    <molecule id="E9PYI1-1"/>
    <property type="protein sequence ID" value="ENSMUSP00000118387.2"/>
    <property type="gene ID" value="ENSMUSG00000074221.13"/>
</dbReference>
<dbReference type="Ensembl" id="ENSMUST00000177931.2">
    <molecule id="E9PYI1-2"/>
    <property type="protein sequence ID" value="ENSMUSP00000137438.2"/>
    <property type="gene ID" value="ENSMUSG00000074221.13"/>
</dbReference>
<dbReference type="GeneID" id="243905"/>
<dbReference type="KEGG" id="mmu:243905"/>
<dbReference type="UCSC" id="uc009gct.2">
    <molecule id="E9PYI1-1"/>
    <property type="organism name" value="mouse"/>
</dbReference>
<dbReference type="UCSC" id="uc009gcu.2">
    <property type="organism name" value="mouse"/>
</dbReference>
<dbReference type="AGR" id="MGI:2142347"/>
<dbReference type="CTD" id="243905"/>
<dbReference type="MGI" id="MGI:2142347">
    <property type="gene designation" value="Zfp568"/>
</dbReference>
<dbReference type="VEuPathDB" id="HostDB:ENSMUSG00000074221"/>
<dbReference type="eggNOG" id="KOG1721">
    <property type="taxonomic scope" value="Eukaryota"/>
</dbReference>
<dbReference type="GeneTree" id="ENSGT00940000164032"/>
<dbReference type="HOGENOM" id="CLU_002678_44_5_1"/>
<dbReference type="InParanoid" id="E9PYI1"/>
<dbReference type="OMA" id="KSELTHH"/>
<dbReference type="OrthoDB" id="654211at2759"/>
<dbReference type="PhylomeDB" id="E9PYI1"/>
<dbReference type="TreeFam" id="TF341817"/>
<dbReference type="BioGRID-ORCS" id="243905">
    <property type="hits" value="2 hits in 80 CRISPR screens"/>
</dbReference>
<dbReference type="ChiTaRS" id="Zfp568">
    <property type="organism name" value="mouse"/>
</dbReference>
<dbReference type="PRO" id="PR:E9PYI1"/>
<dbReference type="Proteomes" id="UP000000589">
    <property type="component" value="Chromosome 7"/>
</dbReference>
<dbReference type="RNAct" id="E9PYI1">
    <property type="molecule type" value="protein"/>
</dbReference>
<dbReference type="Bgee" id="ENSMUSG00000074221">
    <property type="expression patterns" value="Expressed in placenta labyrinth and 218 other cell types or tissues"/>
</dbReference>
<dbReference type="ExpressionAtlas" id="E9PYI1">
    <property type="expression patterns" value="baseline and differential"/>
</dbReference>
<dbReference type="GO" id="GO:0005634">
    <property type="term" value="C:nucleus"/>
    <property type="evidence" value="ECO:0000314"/>
    <property type="project" value="MGI"/>
</dbReference>
<dbReference type="GO" id="GO:0000976">
    <property type="term" value="F:transcription cis-regulatory region binding"/>
    <property type="evidence" value="ECO:0000315"/>
    <property type="project" value="UniProtKB"/>
</dbReference>
<dbReference type="GO" id="GO:0001222">
    <property type="term" value="F:transcription corepressor binding"/>
    <property type="evidence" value="ECO:0000353"/>
    <property type="project" value="UniProtKB"/>
</dbReference>
<dbReference type="GO" id="GO:0008270">
    <property type="term" value="F:zinc ion binding"/>
    <property type="evidence" value="ECO:0007669"/>
    <property type="project" value="UniProtKB-KW"/>
</dbReference>
<dbReference type="GO" id="GO:0060028">
    <property type="term" value="P:convergent extension involved in axis elongation"/>
    <property type="evidence" value="ECO:0000315"/>
    <property type="project" value="MGI"/>
</dbReference>
<dbReference type="GO" id="GO:0022007">
    <property type="term" value="P:convergent extension involved in neural plate elongation"/>
    <property type="evidence" value="ECO:0000315"/>
    <property type="project" value="MGI"/>
</dbReference>
<dbReference type="GO" id="GO:0060669">
    <property type="term" value="P:embryonic placenta morphogenesis"/>
    <property type="evidence" value="ECO:0000315"/>
    <property type="project" value="UniProtKB"/>
</dbReference>
<dbReference type="GO" id="GO:0001701">
    <property type="term" value="P:in utero embryonic development"/>
    <property type="evidence" value="ECO:0000315"/>
    <property type="project" value="UniProtKB"/>
</dbReference>
<dbReference type="GO" id="GO:0045892">
    <property type="term" value="P:negative regulation of DNA-templated transcription"/>
    <property type="evidence" value="ECO:0000314"/>
    <property type="project" value="UniProtKB"/>
</dbReference>
<dbReference type="GO" id="GO:0000122">
    <property type="term" value="P:negative regulation of transcription by RNA polymerase II"/>
    <property type="evidence" value="ECO:0000315"/>
    <property type="project" value="UniProtKB"/>
</dbReference>
<dbReference type="GO" id="GO:0010646">
    <property type="term" value="P:regulation of cell communication"/>
    <property type="evidence" value="ECO:0000315"/>
    <property type="project" value="MGI"/>
</dbReference>
<dbReference type="CDD" id="cd07765">
    <property type="entry name" value="KRAB_A-box"/>
    <property type="match status" value="2"/>
</dbReference>
<dbReference type="FunFam" id="3.30.160.60:FF:000020">
    <property type="entry name" value="Zinc finger protein 14 homolog"/>
    <property type="match status" value="1"/>
</dbReference>
<dbReference type="FunFam" id="3.30.160.60:FF:000295">
    <property type="entry name" value="zinc finger protein 19"/>
    <property type="match status" value="1"/>
</dbReference>
<dbReference type="FunFam" id="3.30.160.60:FF:000358">
    <property type="entry name" value="zinc finger protein 24"/>
    <property type="match status" value="1"/>
</dbReference>
<dbReference type="FunFam" id="3.30.160.60:FF:000352">
    <property type="entry name" value="zinc finger protein 3 homolog"/>
    <property type="match status" value="1"/>
</dbReference>
<dbReference type="FunFam" id="3.30.160.60:FF:003142">
    <property type="entry name" value="Zinc finger protein 30"/>
    <property type="match status" value="1"/>
</dbReference>
<dbReference type="FunFam" id="3.30.160.60:FF:002090">
    <property type="entry name" value="Zinc finger protein 473"/>
    <property type="match status" value="1"/>
</dbReference>
<dbReference type="FunFam" id="3.30.160.60:FF:002254">
    <property type="entry name" value="Zinc finger protein 540"/>
    <property type="match status" value="2"/>
</dbReference>
<dbReference type="FunFam" id="3.30.160.60:FF:000737">
    <property type="entry name" value="Zinc finger protein 565"/>
    <property type="match status" value="1"/>
</dbReference>
<dbReference type="FunFam" id="3.30.160.60:FF:000454">
    <property type="entry name" value="Zinc finger protein 624"/>
    <property type="match status" value="1"/>
</dbReference>
<dbReference type="Gene3D" id="6.10.140.140">
    <property type="match status" value="2"/>
</dbReference>
<dbReference type="Gene3D" id="3.30.160.60">
    <property type="entry name" value="Classic Zinc Finger"/>
    <property type="match status" value="11"/>
</dbReference>
<dbReference type="InterPro" id="IPR050636">
    <property type="entry name" value="C2H2-ZF_domain-containing"/>
</dbReference>
<dbReference type="InterPro" id="IPR001909">
    <property type="entry name" value="KRAB"/>
</dbReference>
<dbReference type="InterPro" id="IPR036051">
    <property type="entry name" value="KRAB_dom_sf"/>
</dbReference>
<dbReference type="InterPro" id="IPR036236">
    <property type="entry name" value="Znf_C2H2_sf"/>
</dbReference>
<dbReference type="InterPro" id="IPR013087">
    <property type="entry name" value="Znf_C2H2_type"/>
</dbReference>
<dbReference type="PANTHER" id="PTHR47772:SF15">
    <property type="entry name" value="REDUCED EXPRESSION 2-RELATED"/>
    <property type="match status" value="1"/>
</dbReference>
<dbReference type="PANTHER" id="PTHR47772">
    <property type="entry name" value="ZINC FINGER PROTEIN 200"/>
    <property type="match status" value="1"/>
</dbReference>
<dbReference type="Pfam" id="PF01352">
    <property type="entry name" value="KRAB"/>
    <property type="match status" value="2"/>
</dbReference>
<dbReference type="Pfam" id="PF00096">
    <property type="entry name" value="zf-C2H2"/>
    <property type="match status" value="11"/>
</dbReference>
<dbReference type="SMART" id="SM00349">
    <property type="entry name" value="KRAB"/>
    <property type="match status" value="2"/>
</dbReference>
<dbReference type="SMART" id="SM00355">
    <property type="entry name" value="ZnF_C2H2"/>
    <property type="match status" value="11"/>
</dbReference>
<dbReference type="SUPFAM" id="SSF57667">
    <property type="entry name" value="beta-beta-alpha zinc fingers"/>
    <property type="match status" value="6"/>
</dbReference>
<dbReference type="SUPFAM" id="SSF109640">
    <property type="entry name" value="KRAB domain (Kruppel-associated box)"/>
    <property type="match status" value="2"/>
</dbReference>
<dbReference type="PROSITE" id="PS50805">
    <property type="entry name" value="KRAB"/>
    <property type="match status" value="2"/>
</dbReference>
<dbReference type="PROSITE" id="PS00028">
    <property type="entry name" value="ZINC_FINGER_C2H2_1"/>
    <property type="match status" value="11"/>
</dbReference>
<dbReference type="PROSITE" id="PS50157">
    <property type="entry name" value="ZINC_FINGER_C2H2_2"/>
    <property type="match status" value="11"/>
</dbReference>